<reference key="1">
    <citation type="journal article" date="2011" name="BMC Genomics">
        <title>Complete genome sequence of the filamentous anoxygenic phototrophic bacterium Chloroflexus aurantiacus.</title>
        <authorList>
            <person name="Tang K.H."/>
            <person name="Barry K."/>
            <person name="Chertkov O."/>
            <person name="Dalin E."/>
            <person name="Han C.S."/>
            <person name="Hauser L.J."/>
            <person name="Honchak B.M."/>
            <person name="Karbach L.E."/>
            <person name="Land M.L."/>
            <person name="Lapidus A."/>
            <person name="Larimer F.W."/>
            <person name="Mikhailova N."/>
            <person name="Pitluck S."/>
            <person name="Pierson B.K."/>
            <person name="Blankenship R.E."/>
        </authorList>
    </citation>
    <scope>NUCLEOTIDE SEQUENCE [LARGE SCALE GENOMIC DNA]</scope>
    <source>
        <strain>ATCC 29366 / DSM 635 / J-10-fl</strain>
    </source>
</reference>
<name>PHS_CHLAA</name>
<organism>
    <name type="scientific">Chloroflexus aurantiacus (strain ATCC 29366 / DSM 635 / J-10-fl)</name>
    <dbReference type="NCBI Taxonomy" id="324602"/>
    <lineage>
        <taxon>Bacteria</taxon>
        <taxon>Bacillati</taxon>
        <taxon>Chloroflexota</taxon>
        <taxon>Chloroflexia</taxon>
        <taxon>Chloroflexales</taxon>
        <taxon>Chloroflexineae</taxon>
        <taxon>Chloroflexaceae</taxon>
        <taxon>Chloroflexus</taxon>
    </lineage>
</organism>
<evidence type="ECO:0000255" key="1">
    <source>
        <dbReference type="HAMAP-Rule" id="MF_00434"/>
    </source>
</evidence>
<protein>
    <recommendedName>
        <fullName evidence="1">Putative pterin-4-alpha-carbinolamine dehydratase</fullName>
        <shortName evidence="1">PHS</shortName>
        <ecNumber evidence="1">4.2.1.96</ecNumber>
    </recommendedName>
    <alternativeName>
        <fullName evidence="1">4-alpha-hydroxy-tetrahydropterin dehydratase</fullName>
    </alternativeName>
    <alternativeName>
        <fullName evidence="1">Pterin carbinolamine dehydratase</fullName>
        <shortName evidence="1">PCD</shortName>
    </alternativeName>
</protein>
<keyword id="KW-0456">Lyase</keyword>
<keyword id="KW-1185">Reference proteome</keyword>
<proteinExistence type="inferred from homology"/>
<dbReference type="EC" id="4.2.1.96" evidence="1"/>
<dbReference type="EMBL" id="CP000909">
    <property type="protein sequence ID" value="ABY36361.1"/>
    <property type="molecule type" value="Genomic_DNA"/>
</dbReference>
<dbReference type="RefSeq" id="WP_012259014.1">
    <property type="nucleotide sequence ID" value="NC_010175.1"/>
</dbReference>
<dbReference type="RefSeq" id="YP_001636750.1">
    <property type="nucleotide sequence ID" value="NC_010175.1"/>
</dbReference>
<dbReference type="SMR" id="A9WI69"/>
<dbReference type="STRING" id="324602.Caur_3165"/>
<dbReference type="EnsemblBacteria" id="ABY36361">
    <property type="protein sequence ID" value="ABY36361"/>
    <property type="gene ID" value="Caur_3165"/>
</dbReference>
<dbReference type="KEGG" id="cau:Caur_3165"/>
<dbReference type="PATRIC" id="fig|324602.8.peg.3572"/>
<dbReference type="eggNOG" id="COG2154">
    <property type="taxonomic scope" value="Bacteria"/>
</dbReference>
<dbReference type="HOGENOM" id="CLU_081974_4_0_0"/>
<dbReference type="InParanoid" id="A9WI69"/>
<dbReference type="Proteomes" id="UP000002008">
    <property type="component" value="Chromosome"/>
</dbReference>
<dbReference type="GO" id="GO:0008124">
    <property type="term" value="F:4-alpha-hydroxytetrahydrobiopterin dehydratase activity"/>
    <property type="evidence" value="ECO:0000318"/>
    <property type="project" value="GO_Central"/>
</dbReference>
<dbReference type="GO" id="GO:0006729">
    <property type="term" value="P:tetrahydrobiopterin biosynthetic process"/>
    <property type="evidence" value="ECO:0007669"/>
    <property type="project" value="InterPro"/>
</dbReference>
<dbReference type="CDD" id="cd00488">
    <property type="entry name" value="PCD_DCoH"/>
    <property type="match status" value="1"/>
</dbReference>
<dbReference type="Gene3D" id="3.30.1360.20">
    <property type="entry name" value="Transcriptional coactivator/pterin dehydratase"/>
    <property type="match status" value="1"/>
</dbReference>
<dbReference type="HAMAP" id="MF_00434">
    <property type="entry name" value="Pterin_4_alpha"/>
    <property type="match status" value="1"/>
</dbReference>
<dbReference type="InterPro" id="IPR036428">
    <property type="entry name" value="PCD_sf"/>
</dbReference>
<dbReference type="InterPro" id="IPR001533">
    <property type="entry name" value="Pterin_deHydtase"/>
</dbReference>
<dbReference type="NCBIfam" id="NF002017">
    <property type="entry name" value="PRK00823.1-2"/>
    <property type="match status" value="1"/>
</dbReference>
<dbReference type="PANTHER" id="PTHR12599">
    <property type="entry name" value="PTERIN-4-ALPHA-CARBINOLAMINE DEHYDRATASE"/>
    <property type="match status" value="1"/>
</dbReference>
<dbReference type="PANTHER" id="PTHR12599:SF0">
    <property type="entry name" value="PTERIN-4-ALPHA-CARBINOLAMINE DEHYDRATASE"/>
    <property type="match status" value="1"/>
</dbReference>
<dbReference type="Pfam" id="PF01329">
    <property type="entry name" value="Pterin_4a"/>
    <property type="match status" value="1"/>
</dbReference>
<dbReference type="SUPFAM" id="SSF55248">
    <property type="entry name" value="PCD-like"/>
    <property type="match status" value="1"/>
</dbReference>
<feature type="chain" id="PRO_1000080607" description="Putative pterin-4-alpha-carbinolamine dehydratase">
    <location>
        <begin position="1"/>
        <end position="93"/>
    </location>
</feature>
<accession>A9WI69</accession>
<gene>
    <name type="ordered locus">Caur_3165</name>
</gene>
<comment type="catalytic activity">
    <reaction evidence="1">
        <text>(4aS,6R)-4a-hydroxy-L-erythro-5,6,7,8-tetrahydrobiopterin = (6R)-L-erythro-6,7-dihydrobiopterin + H2O</text>
        <dbReference type="Rhea" id="RHEA:11920"/>
        <dbReference type="ChEBI" id="CHEBI:15377"/>
        <dbReference type="ChEBI" id="CHEBI:15642"/>
        <dbReference type="ChEBI" id="CHEBI:43120"/>
        <dbReference type="EC" id="4.2.1.96"/>
    </reaction>
</comment>
<comment type="similarity">
    <text evidence="1">Belongs to the pterin-4-alpha-carbinolamine dehydratase family.</text>
</comment>
<sequence>MPRLSEAEIAEQLAQRPDWSLENNEIVRTFRLANFPAAIAFVTHVAFLAEAAGHHPDIDIRYNRVRLALTTHDAGGLTEKDFALAAAIDEIMG</sequence>